<sequence length="177" mass="20192">MIRIIAIVVLFFLQCQADLPPVMKGLEENKVTGVWYGIAAASNCKQFLQMKSDNMPAPVNIYSLNNGHMKSSTSFQTEKGCQQMDVEMTTVEKGHYKWKMQQGDSETIIVATDYDAFLMEFTKIQMGAEVCVTVKLFGRKDTLPEDKIKHFEDHIEKVGLKKEQYIRFHTKATCVPK</sequence>
<protein>
    <recommendedName>
        <fullName>Olfactory protein</fullName>
    </recommendedName>
</protein>
<comment type="subcellular location">
    <subcellularLocation>
        <location evidence="4">Secreted</location>
    </subcellularLocation>
</comment>
<comment type="tissue specificity">
    <text evidence="3">Synthesized in Bowman glands, which secrete the mucus that bathes the cilia of the olfactory neuroepithelium.</text>
</comment>
<comment type="similarity">
    <text evidence="4">Belongs to the calycin superfamily. Lipocalin family.</text>
</comment>
<organism>
    <name type="scientific">Lithobates pipiens</name>
    <name type="common">Northern leopard frog</name>
    <name type="synonym">Rana pipiens</name>
    <dbReference type="NCBI Taxonomy" id="8404"/>
    <lineage>
        <taxon>Eukaryota</taxon>
        <taxon>Metazoa</taxon>
        <taxon>Chordata</taxon>
        <taxon>Craniata</taxon>
        <taxon>Vertebrata</taxon>
        <taxon>Euteleostomi</taxon>
        <taxon>Amphibia</taxon>
        <taxon>Batrachia</taxon>
        <taxon>Anura</taxon>
        <taxon>Neobatrachia</taxon>
        <taxon>Ranoidea</taxon>
        <taxon>Ranidae</taxon>
        <taxon>Lithobates</taxon>
    </lineage>
</organism>
<feature type="signal peptide" evidence="2">
    <location>
        <begin position="1"/>
        <end position="17"/>
    </location>
</feature>
<feature type="chain" id="PRO_0000017939" description="Olfactory protein">
    <location>
        <begin position="18"/>
        <end position="177"/>
    </location>
</feature>
<feature type="disulfide bond" evidence="1">
    <location>
        <begin position="81"/>
        <end position="174"/>
    </location>
</feature>
<dbReference type="EMBL" id="M15531">
    <property type="protein sequence ID" value="AAA49529.1"/>
    <property type="molecule type" value="mRNA"/>
</dbReference>
<dbReference type="PIR" id="A25837">
    <property type="entry name" value="OVFGP"/>
</dbReference>
<dbReference type="SMR" id="P06910"/>
<dbReference type="GO" id="GO:0005576">
    <property type="term" value="C:extracellular region"/>
    <property type="evidence" value="ECO:0007669"/>
    <property type="project" value="UniProtKB-SubCell"/>
</dbReference>
<dbReference type="GO" id="GO:0036094">
    <property type="term" value="F:small molecule binding"/>
    <property type="evidence" value="ECO:0007669"/>
    <property type="project" value="InterPro"/>
</dbReference>
<dbReference type="GO" id="GO:0007608">
    <property type="term" value="P:sensory perception of smell"/>
    <property type="evidence" value="ECO:0007669"/>
    <property type="project" value="UniProtKB-KW"/>
</dbReference>
<dbReference type="CDD" id="cd00301">
    <property type="entry name" value="lipocalin_FABP"/>
    <property type="match status" value="1"/>
</dbReference>
<dbReference type="Gene3D" id="2.40.128.20">
    <property type="match status" value="1"/>
</dbReference>
<dbReference type="InterPro" id="IPR002968">
    <property type="entry name" value="A1-microglobln"/>
</dbReference>
<dbReference type="InterPro" id="IPR012674">
    <property type="entry name" value="Calycin"/>
</dbReference>
<dbReference type="InterPro" id="IPR002345">
    <property type="entry name" value="Lipocalin"/>
</dbReference>
<dbReference type="InterPro" id="IPR022272">
    <property type="entry name" value="Lipocalin_CS"/>
</dbReference>
<dbReference type="InterPro" id="IPR000566">
    <property type="entry name" value="Lipocln_cytosolic_FA-bd_dom"/>
</dbReference>
<dbReference type="PANTHER" id="PTHR11430:SF32">
    <property type="entry name" value="CHLOROPLASTIC LIPOCALIN"/>
    <property type="match status" value="1"/>
</dbReference>
<dbReference type="PANTHER" id="PTHR11430">
    <property type="entry name" value="LIPOCALIN"/>
    <property type="match status" value="1"/>
</dbReference>
<dbReference type="Pfam" id="PF00061">
    <property type="entry name" value="Lipocalin"/>
    <property type="match status" value="1"/>
</dbReference>
<dbReference type="PRINTS" id="PR01215">
    <property type="entry name" value="A1MCGLOBULIN"/>
</dbReference>
<dbReference type="PRINTS" id="PR00179">
    <property type="entry name" value="LIPOCALIN"/>
</dbReference>
<dbReference type="SUPFAM" id="SSF50814">
    <property type="entry name" value="Lipocalins"/>
    <property type="match status" value="1"/>
</dbReference>
<dbReference type="PROSITE" id="PS00213">
    <property type="entry name" value="LIPOCALIN"/>
    <property type="match status" value="1"/>
</dbReference>
<accession>P06910</accession>
<reference key="1">
    <citation type="journal article" date="1987" name="Science">
        <title>Isolation of an olfactory cDNA: similarity to retinol-binding protein suggests a role in olfaction.</title>
        <authorList>
            <person name="Lee K.-H."/>
            <person name="Wells R.G."/>
            <person name="Reed R.R."/>
        </authorList>
    </citation>
    <scope>NUCLEOTIDE SEQUENCE [MRNA]</scope>
    <scope>TISSUE SPECIFICITY</scope>
    <source>
        <tissue>Bowman gland</tissue>
    </source>
</reference>
<keyword id="KW-1015">Disulfide bond</keyword>
<keyword id="KW-0552">Olfaction</keyword>
<keyword id="KW-0964">Secreted</keyword>
<keyword id="KW-0716">Sensory transduction</keyword>
<keyword id="KW-0732">Signal</keyword>
<name>OLFA_LITPI</name>
<proteinExistence type="evidence at transcript level"/>
<evidence type="ECO:0000250" key="1"/>
<evidence type="ECO:0000255" key="2"/>
<evidence type="ECO:0000269" key="3">
    <source>
    </source>
</evidence>
<evidence type="ECO:0000305" key="4"/>